<gene>
    <name evidence="1" type="primary">ispD</name>
    <name type="ordered locus">BF3735</name>
</gene>
<reference key="1">
    <citation type="journal article" date="2005" name="Science">
        <title>Extensive DNA inversions in the B. fragilis genome control variable gene expression.</title>
        <authorList>
            <person name="Cerdeno-Tarraga A.-M."/>
            <person name="Patrick S."/>
            <person name="Crossman L.C."/>
            <person name="Blakely G."/>
            <person name="Abratt V."/>
            <person name="Lennard N."/>
            <person name="Poxton I."/>
            <person name="Duerden B."/>
            <person name="Harris B."/>
            <person name="Quail M.A."/>
            <person name="Barron A."/>
            <person name="Clark L."/>
            <person name="Corton C."/>
            <person name="Doggett J."/>
            <person name="Holden M.T.G."/>
            <person name="Larke N."/>
            <person name="Line A."/>
            <person name="Lord A."/>
            <person name="Norbertczak H."/>
            <person name="Ormond D."/>
            <person name="Price C."/>
            <person name="Rabbinowitsch E."/>
            <person name="Woodward J."/>
            <person name="Barrell B.G."/>
            <person name="Parkhill J."/>
        </authorList>
    </citation>
    <scope>NUCLEOTIDE SEQUENCE [LARGE SCALE GENOMIC DNA]</scope>
    <source>
        <strain>ATCC 25285 / DSM 2151 / CCUG 4856 / JCM 11019 / LMG 10263 / NCTC 9343 / Onslow / VPI 2553 / EN-2</strain>
    </source>
</reference>
<accession>Q5L917</accession>
<dbReference type="EC" id="2.7.7.60" evidence="1"/>
<dbReference type="EMBL" id="CR626927">
    <property type="protein sequence ID" value="CAH09415.1"/>
    <property type="molecule type" value="Genomic_DNA"/>
</dbReference>
<dbReference type="RefSeq" id="WP_010993549.1">
    <property type="nucleotide sequence ID" value="NC_003228.3"/>
</dbReference>
<dbReference type="SMR" id="Q5L917"/>
<dbReference type="PaxDb" id="272559-BF9343_3634"/>
<dbReference type="GeneID" id="60365711"/>
<dbReference type="KEGG" id="bfs:BF9343_3634"/>
<dbReference type="eggNOG" id="COG1211">
    <property type="taxonomic scope" value="Bacteria"/>
</dbReference>
<dbReference type="HOGENOM" id="CLU_061281_2_2_10"/>
<dbReference type="UniPathway" id="UPA00056">
    <property type="reaction ID" value="UER00093"/>
</dbReference>
<dbReference type="Proteomes" id="UP000006731">
    <property type="component" value="Chromosome"/>
</dbReference>
<dbReference type="GO" id="GO:0050518">
    <property type="term" value="F:2-C-methyl-D-erythritol 4-phosphate cytidylyltransferase activity"/>
    <property type="evidence" value="ECO:0007669"/>
    <property type="project" value="UniProtKB-UniRule"/>
</dbReference>
<dbReference type="GO" id="GO:0019288">
    <property type="term" value="P:isopentenyl diphosphate biosynthetic process, methylerythritol 4-phosphate pathway"/>
    <property type="evidence" value="ECO:0007669"/>
    <property type="project" value="UniProtKB-UniRule"/>
</dbReference>
<dbReference type="CDD" id="cd02516">
    <property type="entry name" value="CDP-ME_synthetase"/>
    <property type="match status" value="1"/>
</dbReference>
<dbReference type="FunFam" id="3.90.550.10:FF:000003">
    <property type="entry name" value="2-C-methyl-D-erythritol 4-phosphate cytidylyltransferase"/>
    <property type="match status" value="1"/>
</dbReference>
<dbReference type="Gene3D" id="3.90.550.10">
    <property type="entry name" value="Spore Coat Polysaccharide Biosynthesis Protein SpsA, Chain A"/>
    <property type="match status" value="1"/>
</dbReference>
<dbReference type="HAMAP" id="MF_00108">
    <property type="entry name" value="IspD"/>
    <property type="match status" value="1"/>
</dbReference>
<dbReference type="InterPro" id="IPR001228">
    <property type="entry name" value="IspD"/>
</dbReference>
<dbReference type="InterPro" id="IPR034683">
    <property type="entry name" value="IspD/TarI"/>
</dbReference>
<dbReference type="InterPro" id="IPR050088">
    <property type="entry name" value="IspD/TarI_cytidylyltransf_bact"/>
</dbReference>
<dbReference type="InterPro" id="IPR029044">
    <property type="entry name" value="Nucleotide-diphossugar_trans"/>
</dbReference>
<dbReference type="NCBIfam" id="TIGR00453">
    <property type="entry name" value="ispD"/>
    <property type="match status" value="1"/>
</dbReference>
<dbReference type="NCBIfam" id="NF001186">
    <property type="entry name" value="PRK00155.2-3"/>
    <property type="match status" value="1"/>
</dbReference>
<dbReference type="PANTHER" id="PTHR32125">
    <property type="entry name" value="2-C-METHYL-D-ERYTHRITOL 4-PHOSPHATE CYTIDYLYLTRANSFERASE, CHLOROPLASTIC"/>
    <property type="match status" value="1"/>
</dbReference>
<dbReference type="PANTHER" id="PTHR32125:SF4">
    <property type="entry name" value="2-C-METHYL-D-ERYTHRITOL 4-PHOSPHATE CYTIDYLYLTRANSFERASE, CHLOROPLASTIC"/>
    <property type="match status" value="1"/>
</dbReference>
<dbReference type="Pfam" id="PF01128">
    <property type="entry name" value="IspD"/>
    <property type="match status" value="1"/>
</dbReference>
<dbReference type="SUPFAM" id="SSF53448">
    <property type="entry name" value="Nucleotide-diphospho-sugar transferases"/>
    <property type="match status" value="1"/>
</dbReference>
<keyword id="KW-0414">Isoprene biosynthesis</keyword>
<keyword id="KW-0548">Nucleotidyltransferase</keyword>
<keyword id="KW-0808">Transferase</keyword>
<proteinExistence type="inferred from homology"/>
<organism>
    <name type="scientific">Bacteroides fragilis (strain ATCC 25285 / DSM 2151 / CCUG 4856 / JCM 11019 / LMG 10263 / NCTC 9343 / Onslow / VPI 2553 / EN-2)</name>
    <dbReference type="NCBI Taxonomy" id="272559"/>
    <lineage>
        <taxon>Bacteria</taxon>
        <taxon>Pseudomonadati</taxon>
        <taxon>Bacteroidota</taxon>
        <taxon>Bacteroidia</taxon>
        <taxon>Bacteroidales</taxon>
        <taxon>Bacteroidaceae</taxon>
        <taxon>Bacteroides</taxon>
    </lineage>
</organism>
<protein>
    <recommendedName>
        <fullName evidence="1">2-C-methyl-D-erythritol 4-phosphate cytidylyltransferase</fullName>
        <ecNumber evidence="1">2.7.7.60</ecNumber>
    </recommendedName>
    <alternativeName>
        <fullName evidence="1">4-diphosphocytidyl-2C-methyl-D-erythritol synthase</fullName>
    </alternativeName>
    <alternativeName>
        <fullName evidence="1">MEP cytidylyltransferase</fullName>
        <shortName evidence="1">MCT</shortName>
    </alternativeName>
</protein>
<comment type="function">
    <text evidence="1">Catalyzes the formation of 4-diphosphocytidyl-2-C-methyl-D-erythritol from CTP and 2-C-methyl-D-erythritol 4-phosphate (MEP).</text>
</comment>
<comment type="catalytic activity">
    <reaction evidence="1">
        <text>2-C-methyl-D-erythritol 4-phosphate + CTP + H(+) = 4-CDP-2-C-methyl-D-erythritol + diphosphate</text>
        <dbReference type="Rhea" id="RHEA:13429"/>
        <dbReference type="ChEBI" id="CHEBI:15378"/>
        <dbReference type="ChEBI" id="CHEBI:33019"/>
        <dbReference type="ChEBI" id="CHEBI:37563"/>
        <dbReference type="ChEBI" id="CHEBI:57823"/>
        <dbReference type="ChEBI" id="CHEBI:58262"/>
        <dbReference type="EC" id="2.7.7.60"/>
    </reaction>
</comment>
<comment type="pathway">
    <text evidence="1">Isoprenoid biosynthesis; isopentenyl diphosphate biosynthesis via DXP pathway; isopentenyl diphosphate from 1-deoxy-D-xylulose 5-phosphate: step 2/6.</text>
</comment>
<comment type="similarity">
    <text evidence="1">Belongs to the IspD/TarI cytidylyltransferase family. IspD subfamily.</text>
</comment>
<sequence length="219" mass="24462">MCRTALIVAGGKGLRMGSELPKQFLPIGGKPVLMRTLEAFHRFDEKMQIILVLPREQQDFWRELCEEHGFDIKHLIADGGETRFHSVKNGLALVNGIGVVGIHDGVRPFVSQEVIARCFLEAVVRKAVIPVIDVVETVRHLTESGSETVSRNDYKLVQTPQVFDADLLKRAYEQEFTPFFTDDASVVEAMGVPVYLVEGNRENIKITTPFDLKVASALL</sequence>
<evidence type="ECO:0000255" key="1">
    <source>
        <dbReference type="HAMAP-Rule" id="MF_00108"/>
    </source>
</evidence>
<feature type="chain" id="PRO_0000237774" description="2-C-methyl-D-erythritol 4-phosphate cytidylyltransferase">
    <location>
        <begin position="1"/>
        <end position="219"/>
    </location>
</feature>
<feature type="site" description="Transition state stabilizer" evidence="1">
    <location>
        <position position="15"/>
    </location>
</feature>
<feature type="site" description="Transition state stabilizer" evidence="1">
    <location>
        <position position="22"/>
    </location>
</feature>
<feature type="site" description="Positions MEP for the nucleophilic attack" evidence="1">
    <location>
        <position position="151"/>
    </location>
</feature>
<feature type="site" description="Positions MEP for the nucleophilic attack" evidence="1">
    <location>
        <position position="205"/>
    </location>
</feature>
<name>ISPD_BACFN</name>